<gene>
    <name type="primary">utr4</name>
    <name type="ORF">BC1G_15439</name>
    <name type="ORF">BCIN_03g07540</name>
</gene>
<name>ENOPH_BOTFB</name>
<dbReference type="EC" id="3.1.3.77" evidence="1"/>
<dbReference type="EMBL" id="CP009807">
    <property type="protein sequence ID" value="ATZ48557.1"/>
    <property type="molecule type" value="Genomic_DNA"/>
</dbReference>
<dbReference type="SMR" id="A6SRT0"/>
<dbReference type="EnsemblFungi" id="Bcin03g07540.1">
    <property type="protein sequence ID" value="Bcin03g07540.1"/>
    <property type="gene ID" value="Bcin03g07540"/>
</dbReference>
<dbReference type="VEuPathDB" id="FungiDB:Bcin03g07540"/>
<dbReference type="OrthoDB" id="272500at2759"/>
<dbReference type="UniPathway" id="UPA00904">
    <property type="reaction ID" value="UER00876"/>
</dbReference>
<dbReference type="UniPathway" id="UPA00904">
    <property type="reaction ID" value="UER00877"/>
</dbReference>
<dbReference type="Proteomes" id="UP000001798">
    <property type="component" value="Chromosome bcin03"/>
</dbReference>
<dbReference type="GO" id="GO:0005737">
    <property type="term" value="C:cytoplasm"/>
    <property type="evidence" value="ECO:0007669"/>
    <property type="project" value="UniProtKB-SubCell"/>
</dbReference>
<dbReference type="GO" id="GO:0005634">
    <property type="term" value="C:nucleus"/>
    <property type="evidence" value="ECO:0007669"/>
    <property type="project" value="UniProtKB-SubCell"/>
</dbReference>
<dbReference type="GO" id="GO:0043874">
    <property type="term" value="F:acireductone synthase activity"/>
    <property type="evidence" value="ECO:0007669"/>
    <property type="project" value="UniProtKB-EC"/>
</dbReference>
<dbReference type="GO" id="GO:0000287">
    <property type="term" value="F:magnesium ion binding"/>
    <property type="evidence" value="ECO:0007669"/>
    <property type="project" value="UniProtKB-UniRule"/>
</dbReference>
<dbReference type="GO" id="GO:0019509">
    <property type="term" value="P:L-methionine salvage from methylthioadenosine"/>
    <property type="evidence" value="ECO:0007669"/>
    <property type="project" value="UniProtKB-UniRule"/>
</dbReference>
<dbReference type="CDD" id="cd01629">
    <property type="entry name" value="HAD_EP"/>
    <property type="match status" value="1"/>
</dbReference>
<dbReference type="FunFam" id="1.10.720.60:FF:000007">
    <property type="entry name" value="Enolase-phosphatase E1"/>
    <property type="match status" value="1"/>
</dbReference>
<dbReference type="Gene3D" id="1.10.720.60">
    <property type="match status" value="1"/>
</dbReference>
<dbReference type="Gene3D" id="3.40.50.1000">
    <property type="entry name" value="HAD superfamily/HAD-like"/>
    <property type="match status" value="1"/>
</dbReference>
<dbReference type="HAMAP" id="MF_03117">
    <property type="entry name" value="Salvage_MtnC_euk"/>
    <property type="match status" value="1"/>
</dbReference>
<dbReference type="InterPro" id="IPR023943">
    <property type="entry name" value="Enolase-ppase_E1"/>
</dbReference>
<dbReference type="InterPro" id="IPR027511">
    <property type="entry name" value="ENOPH1_eukaryotes"/>
</dbReference>
<dbReference type="InterPro" id="IPR036412">
    <property type="entry name" value="HAD-like_sf"/>
</dbReference>
<dbReference type="InterPro" id="IPR023214">
    <property type="entry name" value="HAD_sf"/>
</dbReference>
<dbReference type="NCBIfam" id="TIGR01691">
    <property type="entry name" value="enolase-ppase"/>
    <property type="match status" value="1"/>
</dbReference>
<dbReference type="PANTHER" id="PTHR20371">
    <property type="entry name" value="ENOLASE-PHOSPHATASE E1"/>
    <property type="match status" value="1"/>
</dbReference>
<dbReference type="PANTHER" id="PTHR20371:SF1">
    <property type="entry name" value="ENOLASE-PHOSPHATASE E1"/>
    <property type="match status" value="1"/>
</dbReference>
<dbReference type="SFLD" id="SFLDG01133">
    <property type="entry name" value="C1.5.4:_Enolase-phosphatase_Li"/>
    <property type="match status" value="1"/>
</dbReference>
<dbReference type="SFLD" id="SFLDS00003">
    <property type="entry name" value="Haloacid_Dehalogenase"/>
    <property type="match status" value="1"/>
</dbReference>
<dbReference type="SUPFAM" id="SSF56784">
    <property type="entry name" value="HAD-like"/>
    <property type="match status" value="1"/>
</dbReference>
<reference key="1">
    <citation type="journal article" date="2011" name="PLoS Genet.">
        <title>Genomic analysis of the necrotrophic fungal pathogens Sclerotinia sclerotiorum and Botrytis cinerea.</title>
        <authorList>
            <person name="Amselem J."/>
            <person name="Cuomo C.A."/>
            <person name="van Kan J.A.L."/>
            <person name="Viaud M."/>
            <person name="Benito E.P."/>
            <person name="Couloux A."/>
            <person name="Coutinho P.M."/>
            <person name="de Vries R.P."/>
            <person name="Dyer P.S."/>
            <person name="Fillinger S."/>
            <person name="Fournier E."/>
            <person name="Gout L."/>
            <person name="Hahn M."/>
            <person name="Kohn L."/>
            <person name="Lapalu N."/>
            <person name="Plummer K.M."/>
            <person name="Pradier J.-M."/>
            <person name="Quevillon E."/>
            <person name="Sharon A."/>
            <person name="Simon A."/>
            <person name="ten Have A."/>
            <person name="Tudzynski B."/>
            <person name="Tudzynski P."/>
            <person name="Wincker P."/>
            <person name="Andrew M."/>
            <person name="Anthouard V."/>
            <person name="Beever R.E."/>
            <person name="Beffa R."/>
            <person name="Benoit I."/>
            <person name="Bouzid O."/>
            <person name="Brault B."/>
            <person name="Chen Z."/>
            <person name="Choquer M."/>
            <person name="Collemare J."/>
            <person name="Cotton P."/>
            <person name="Danchin E.G."/>
            <person name="Da Silva C."/>
            <person name="Gautier A."/>
            <person name="Giraud C."/>
            <person name="Giraud T."/>
            <person name="Gonzalez C."/>
            <person name="Grossetete S."/>
            <person name="Gueldener U."/>
            <person name="Henrissat B."/>
            <person name="Howlett B.J."/>
            <person name="Kodira C."/>
            <person name="Kretschmer M."/>
            <person name="Lappartient A."/>
            <person name="Leroch M."/>
            <person name="Levis C."/>
            <person name="Mauceli E."/>
            <person name="Neuveglise C."/>
            <person name="Oeser B."/>
            <person name="Pearson M."/>
            <person name="Poulain J."/>
            <person name="Poussereau N."/>
            <person name="Quesneville H."/>
            <person name="Rascle C."/>
            <person name="Schumacher J."/>
            <person name="Segurens B."/>
            <person name="Sexton A."/>
            <person name="Silva E."/>
            <person name="Sirven C."/>
            <person name="Soanes D.M."/>
            <person name="Talbot N.J."/>
            <person name="Templeton M."/>
            <person name="Yandava C."/>
            <person name="Yarden O."/>
            <person name="Zeng Q."/>
            <person name="Rollins J.A."/>
            <person name="Lebrun M.-H."/>
            <person name="Dickman M."/>
        </authorList>
    </citation>
    <scope>NUCLEOTIDE SEQUENCE [LARGE SCALE GENOMIC DNA]</scope>
    <source>
        <strain>B05.10</strain>
    </source>
</reference>
<reference key="2">
    <citation type="journal article" date="2012" name="Eukaryot. Cell">
        <title>Genome update of Botrytis cinerea strains B05.10 and T4.</title>
        <authorList>
            <person name="Staats M."/>
            <person name="van Kan J.A.L."/>
        </authorList>
    </citation>
    <scope>NUCLEOTIDE SEQUENCE [LARGE SCALE GENOMIC DNA]</scope>
    <scope>GENOME REANNOTATION</scope>
    <source>
        <strain>B05.10</strain>
    </source>
</reference>
<reference key="3">
    <citation type="journal article" date="2017" name="Mol. Plant Pathol.">
        <title>A gapless genome sequence of the fungus Botrytis cinerea.</title>
        <authorList>
            <person name="van Kan J.A.L."/>
            <person name="Stassen J.H.M."/>
            <person name="Mosbach A."/>
            <person name="van der Lee T.A.J."/>
            <person name="Faino L."/>
            <person name="Farmer A.D."/>
            <person name="Papasotiriou D.G."/>
            <person name="Zhou S."/>
            <person name="Seidl M.F."/>
            <person name="Cottam E."/>
            <person name="Edel D."/>
            <person name="Hahn M."/>
            <person name="Schwartz D.C."/>
            <person name="Dietrich R.A."/>
            <person name="Widdison S."/>
            <person name="Scalliet G."/>
        </authorList>
    </citation>
    <scope>NUCLEOTIDE SEQUENCE [LARGE SCALE GENOMIC DNA]</scope>
    <scope>GENOME REANNOTATION</scope>
    <source>
        <strain>B05.10</strain>
    </source>
</reference>
<feature type="chain" id="PRO_0000393991" description="Enolase-phosphatase E1">
    <location>
        <begin position="1"/>
        <end position="256"/>
    </location>
</feature>
<feature type="binding site" evidence="1">
    <location>
        <position position="13"/>
    </location>
    <ligand>
        <name>Mg(2+)</name>
        <dbReference type="ChEBI" id="CHEBI:18420"/>
    </ligand>
</feature>
<feature type="binding site" evidence="1">
    <location>
        <position position="15"/>
    </location>
    <ligand>
        <name>Mg(2+)</name>
        <dbReference type="ChEBI" id="CHEBI:18420"/>
    </ligand>
</feature>
<feature type="binding site" evidence="1">
    <location>
        <begin position="127"/>
        <end position="128"/>
    </location>
    <ligand>
        <name>substrate</name>
    </ligand>
</feature>
<feature type="binding site" evidence="1">
    <location>
        <position position="175"/>
    </location>
    <ligand>
        <name>substrate</name>
    </ligand>
</feature>
<feature type="binding site" evidence="1">
    <location>
        <position position="202"/>
    </location>
    <ligand>
        <name>Mg(2+)</name>
        <dbReference type="ChEBI" id="CHEBI:18420"/>
    </ligand>
</feature>
<comment type="function">
    <text evidence="1">Bifunctional enzyme that catalyzes the enolization of 2,3-diketo-5-methylthiopentyl-1-phosphate (DK-MTP-1-P) into the intermediate 2-hydroxy-3-keto-5-methylthiopentenyl-1-phosphate (HK-MTPenyl-1-P), which is then dephosphorylated to form the acireductone 1,2-dihydroxy-3-keto-5-methylthiopentene (DHK-MTPene).</text>
</comment>
<comment type="catalytic activity">
    <reaction evidence="1">
        <text>5-methylsulfanyl-2,3-dioxopentyl phosphate + H2O = 1,2-dihydroxy-5-(methylsulfanyl)pent-1-en-3-one + phosphate</text>
        <dbReference type="Rhea" id="RHEA:21700"/>
        <dbReference type="ChEBI" id="CHEBI:15377"/>
        <dbReference type="ChEBI" id="CHEBI:43474"/>
        <dbReference type="ChEBI" id="CHEBI:49252"/>
        <dbReference type="ChEBI" id="CHEBI:58828"/>
        <dbReference type="EC" id="3.1.3.77"/>
    </reaction>
</comment>
<comment type="cofactor">
    <cofactor evidence="1">
        <name>Mg(2+)</name>
        <dbReference type="ChEBI" id="CHEBI:18420"/>
    </cofactor>
    <text evidence="1">Binds 1 Mg(2+) ion per subunit.</text>
</comment>
<comment type="pathway">
    <text evidence="1">Amino-acid biosynthesis; L-methionine biosynthesis via salvage pathway; L-methionine from S-methyl-5-thio-alpha-D-ribose 1-phosphate: step 3/6.</text>
</comment>
<comment type="pathway">
    <text evidence="1">Amino-acid biosynthesis; L-methionine biosynthesis via salvage pathway; L-methionine from S-methyl-5-thio-alpha-D-ribose 1-phosphate: step 4/6.</text>
</comment>
<comment type="subunit">
    <text evidence="1">Monomer.</text>
</comment>
<comment type="subcellular location">
    <subcellularLocation>
        <location evidence="1">Cytoplasm</location>
    </subcellularLocation>
    <subcellularLocation>
        <location evidence="1">Nucleus</location>
    </subcellularLocation>
</comment>
<comment type="similarity">
    <text evidence="1">Belongs to the HAD-like hydrolase superfamily. MasA/MtnC family.</text>
</comment>
<protein>
    <recommendedName>
        <fullName evidence="1">Enolase-phosphatase E1</fullName>
        <ecNumber evidence="1">3.1.3.77</ecNumber>
    </recommendedName>
    <alternativeName>
        <fullName evidence="1">2,3-diketo-5-methylthio-1-phosphopentane phosphatase</fullName>
    </alternativeName>
</protein>
<accession>A6SRT0</accession>
<accession>A0A384JDR4</accession>
<proteinExistence type="inferred from homology"/>
<keyword id="KW-0028">Amino-acid biosynthesis</keyword>
<keyword id="KW-0963">Cytoplasm</keyword>
<keyword id="KW-0378">Hydrolase</keyword>
<keyword id="KW-0460">Magnesium</keyword>
<keyword id="KW-0479">Metal-binding</keyword>
<keyword id="KW-0486">Methionine biosynthesis</keyword>
<keyword id="KW-0539">Nucleus</keyword>
<keyword id="KW-1185">Reference proteome</keyword>
<sequence length="256" mass="28582">MEGKPRVKVVLLDIEGTVCPISFVKDILFPYALAALPETLSTQWDSPSFLPYRSAFPPEHASTPDALLSHVRDLMAQDLKIPYLKSLQGYLWLRGYESGELKCPLFPDVYPALKKWRDNGAKICIYSSGSVAAQKLLWRYTTEGDLRSCIWNGLEGDDGRELEGGYWDTVNAGLKQHMASYEKIAKANSALGEVGEWLFLSDNIKEVRAAREAGMKSFVVVREGNAEVTAEEREGQVLVESFAEVEKWVEVTADKA</sequence>
<evidence type="ECO:0000255" key="1">
    <source>
        <dbReference type="HAMAP-Rule" id="MF_03117"/>
    </source>
</evidence>
<organism>
    <name type="scientific">Botryotinia fuckeliana (strain B05.10)</name>
    <name type="common">Noble rot fungus</name>
    <name type="synonym">Botrytis cinerea</name>
    <dbReference type="NCBI Taxonomy" id="332648"/>
    <lineage>
        <taxon>Eukaryota</taxon>
        <taxon>Fungi</taxon>
        <taxon>Dikarya</taxon>
        <taxon>Ascomycota</taxon>
        <taxon>Pezizomycotina</taxon>
        <taxon>Leotiomycetes</taxon>
        <taxon>Helotiales</taxon>
        <taxon>Sclerotiniaceae</taxon>
        <taxon>Botrytis</taxon>
    </lineage>
</organism>